<dbReference type="EC" id="2.7.2.11" evidence="1"/>
<dbReference type="EMBL" id="CU928162">
    <property type="protein sequence ID" value="CAR06490.1"/>
    <property type="molecule type" value="Genomic_DNA"/>
</dbReference>
<dbReference type="RefSeq" id="WP_001285288.1">
    <property type="nucleotide sequence ID" value="NC_011745.1"/>
</dbReference>
<dbReference type="SMR" id="B7MQ78"/>
<dbReference type="GeneID" id="93777151"/>
<dbReference type="KEGG" id="ecq:ECED1_0276"/>
<dbReference type="HOGENOM" id="CLU_025400_2_0_6"/>
<dbReference type="UniPathway" id="UPA00098">
    <property type="reaction ID" value="UER00359"/>
</dbReference>
<dbReference type="Proteomes" id="UP000000748">
    <property type="component" value="Chromosome"/>
</dbReference>
<dbReference type="GO" id="GO:0005829">
    <property type="term" value="C:cytosol"/>
    <property type="evidence" value="ECO:0007669"/>
    <property type="project" value="TreeGrafter"/>
</dbReference>
<dbReference type="GO" id="GO:0005524">
    <property type="term" value="F:ATP binding"/>
    <property type="evidence" value="ECO:0007669"/>
    <property type="project" value="UniProtKB-KW"/>
</dbReference>
<dbReference type="GO" id="GO:0004349">
    <property type="term" value="F:glutamate 5-kinase activity"/>
    <property type="evidence" value="ECO:0007669"/>
    <property type="project" value="UniProtKB-UniRule"/>
</dbReference>
<dbReference type="GO" id="GO:0003723">
    <property type="term" value="F:RNA binding"/>
    <property type="evidence" value="ECO:0007669"/>
    <property type="project" value="InterPro"/>
</dbReference>
<dbReference type="GO" id="GO:0055129">
    <property type="term" value="P:L-proline biosynthetic process"/>
    <property type="evidence" value="ECO:0007669"/>
    <property type="project" value="UniProtKB-UniRule"/>
</dbReference>
<dbReference type="CDD" id="cd04242">
    <property type="entry name" value="AAK_G5K_ProB"/>
    <property type="match status" value="1"/>
</dbReference>
<dbReference type="CDD" id="cd21157">
    <property type="entry name" value="PUA_G5K"/>
    <property type="match status" value="1"/>
</dbReference>
<dbReference type="FunFam" id="2.30.130.10:FF:000003">
    <property type="entry name" value="Glutamate 5-kinase"/>
    <property type="match status" value="1"/>
</dbReference>
<dbReference type="FunFam" id="3.40.1160.10:FF:000006">
    <property type="entry name" value="Glutamate 5-kinase"/>
    <property type="match status" value="1"/>
</dbReference>
<dbReference type="Gene3D" id="3.40.1160.10">
    <property type="entry name" value="Acetylglutamate kinase-like"/>
    <property type="match status" value="2"/>
</dbReference>
<dbReference type="Gene3D" id="2.30.130.10">
    <property type="entry name" value="PUA domain"/>
    <property type="match status" value="1"/>
</dbReference>
<dbReference type="HAMAP" id="MF_00456">
    <property type="entry name" value="ProB"/>
    <property type="match status" value="1"/>
</dbReference>
<dbReference type="InterPro" id="IPR036393">
    <property type="entry name" value="AceGlu_kinase-like_sf"/>
</dbReference>
<dbReference type="InterPro" id="IPR001048">
    <property type="entry name" value="Asp/Glu/Uridylate_kinase"/>
</dbReference>
<dbReference type="InterPro" id="IPR041739">
    <property type="entry name" value="G5K_ProB"/>
</dbReference>
<dbReference type="InterPro" id="IPR001057">
    <property type="entry name" value="Glu/AcGlu_kinase"/>
</dbReference>
<dbReference type="InterPro" id="IPR011529">
    <property type="entry name" value="Glu_5kinase"/>
</dbReference>
<dbReference type="InterPro" id="IPR005715">
    <property type="entry name" value="Glu_5kinase/COase_Synthase"/>
</dbReference>
<dbReference type="InterPro" id="IPR019797">
    <property type="entry name" value="Glutamate_5-kinase_CS"/>
</dbReference>
<dbReference type="InterPro" id="IPR002478">
    <property type="entry name" value="PUA"/>
</dbReference>
<dbReference type="InterPro" id="IPR015947">
    <property type="entry name" value="PUA-like_sf"/>
</dbReference>
<dbReference type="InterPro" id="IPR036974">
    <property type="entry name" value="PUA_sf"/>
</dbReference>
<dbReference type="NCBIfam" id="TIGR01027">
    <property type="entry name" value="proB"/>
    <property type="match status" value="1"/>
</dbReference>
<dbReference type="PANTHER" id="PTHR43654">
    <property type="entry name" value="GLUTAMATE 5-KINASE"/>
    <property type="match status" value="1"/>
</dbReference>
<dbReference type="PANTHER" id="PTHR43654:SF1">
    <property type="entry name" value="ISOPENTENYL PHOSPHATE KINASE"/>
    <property type="match status" value="1"/>
</dbReference>
<dbReference type="Pfam" id="PF00696">
    <property type="entry name" value="AA_kinase"/>
    <property type="match status" value="1"/>
</dbReference>
<dbReference type="Pfam" id="PF01472">
    <property type="entry name" value="PUA"/>
    <property type="match status" value="1"/>
</dbReference>
<dbReference type="PIRSF" id="PIRSF000729">
    <property type="entry name" value="GK"/>
    <property type="match status" value="1"/>
</dbReference>
<dbReference type="PRINTS" id="PR00474">
    <property type="entry name" value="GLU5KINASE"/>
</dbReference>
<dbReference type="SMART" id="SM00359">
    <property type="entry name" value="PUA"/>
    <property type="match status" value="1"/>
</dbReference>
<dbReference type="SUPFAM" id="SSF53633">
    <property type="entry name" value="Carbamate kinase-like"/>
    <property type="match status" value="1"/>
</dbReference>
<dbReference type="SUPFAM" id="SSF88697">
    <property type="entry name" value="PUA domain-like"/>
    <property type="match status" value="1"/>
</dbReference>
<dbReference type="PROSITE" id="PS00902">
    <property type="entry name" value="GLUTAMATE_5_KINASE"/>
    <property type="match status" value="1"/>
</dbReference>
<dbReference type="PROSITE" id="PS50890">
    <property type="entry name" value="PUA"/>
    <property type="match status" value="1"/>
</dbReference>
<reference key="1">
    <citation type="journal article" date="2009" name="PLoS Genet.">
        <title>Organised genome dynamics in the Escherichia coli species results in highly diverse adaptive paths.</title>
        <authorList>
            <person name="Touchon M."/>
            <person name="Hoede C."/>
            <person name="Tenaillon O."/>
            <person name="Barbe V."/>
            <person name="Baeriswyl S."/>
            <person name="Bidet P."/>
            <person name="Bingen E."/>
            <person name="Bonacorsi S."/>
            <person name="Bouchier C."/>
            <person name="Bouvet O."/>
            <person name="Calteau A."/>
            <person name="Chiapello H."/>
            <person name="Clermont O."/>
            <person name="Cruveiller S."/>
            <person name="Danchin A."/>
            <person name="Diard M."/>
            <person name="Dossat C."/>
            <person name="Karoui M.E."/>
            <person name="Frapy E."/>
            <person name="Garry L."/>
            <person name="Ghigo J.M."/>
            <person name="Gilles A.M."/>
            <person name="Johnson J."/>
            <person name="Le Bouguenec C."/>
            <person name="Lescat M."/>
            <person name="Mangenot S."/>
            <person name="Martinez-Jehanne V."/>
            <person name="Matic I."/>
            <person name="Nassif X."/>
            <person name="Oztas S."/>
            <person name="Petit M.A."/>
            <person name="Pichon C."/>
            <person name="Rouy Z."/>
            <person name="Ruf C.S."/>
            <person name="Schneider D."/>
            <person name="Tourret J."/>
            <person name="Vacherie B."/>
            <person name="Vallenet D."/>
            <person name="Medigue C."/>
            <person name="Rocha E.P.C."/>
            <person name="Denamur E."/>
        </authorList>
    </citation>
    <scope>NUCLEOTIDE SEQUENCE [LARGE SCALE GENOMIC DNA]</scope>
    <source>
        <strain>ED1a</strain>
    </source>
</reference>
<comment type="function">
    <text evidence="1">Catalyzes the transfer of a phosphate group to glutamate to form L-glutamate 5-phosphate.</text>
</comment>
<comment type="catalytic activity">
    <reaction evidence="1">
        <text>L-glutamate + ATP = L-glutamyl 5-phosphate + ADP</text>
        <dbReference type="Rhea" id="RHEA:14877"/>
        <dbReference type="ChEBI" id="CHEBI:29985"/>
        <dbReference type="ChEBI" id="CHEBI:30616"/>
        <dbReference type="ChEBI" id="CHEBI:58274"/>
        <dbReference type="ChEBI" id="CHEBI:456216"/>
        <dbReference type="EC" id="2.7.2.11"/>
    </reaction>
</comment>
<comment type="pathway">
    <text evidence="1">Amino-acid biosynthesis; L-proline biosynthesis; L-glutamate 5-semialdehyde from L-glutamate: step 1/2.</text>
</comment>
<comment type="subcellular location">
    <subcellularLocation>
        <location evidence="1">Cytoplasm</location>
    </subcellularLocation>
</comment>
<comment type="similarity">
    <text evidence="1">Belongs to the glutamate 5-kinase family.</text>
</comment>
<sequence>MSDSQTLVVKLGTSVLTGGSRRLNRAHIVELVRQCAQLHAAGHRIVIVTSGAIAAGREHLGYPELPATIASKQLLAAVGQSRLIQLWEQLFSIYGIHVGQMLLTRADMEDRERFLNARDTLRALLDNNIVPVINENDAVATAEIKVGDNDNLSALAAILAGADKLLLLTDQKGLYTADPRSNPQAELIKDVYGIDDALRAIAGDSVSGLGTGGMSTKLQAADVACRAGIDTIIAAGSKPGVIGDVMEGISVGTLFHAQATPLENRKRWIFGAPPAGEITVDEGATAAILERGSSLLPKGIKSVTGNFSRGEVIRICNLEGRDIAHGVSRYNSDALRRIAGHHSQEIDAILGYEYGPVAVHRDDMITR</sequence>
<evidence type="ECO:0000255" key="1">
    <source>
        <dbReference type="HAMAP-Rule" id="MF_00456"/>
    </source>
</evidence>
<name>PROB_ECO81</name>
<protein>
    <recommendedName>
        <fullName evidence="1">Glutamate 5-kinase</fullName>
        <ecNumber evidence="1">2.7.2.11</ecNumber>
    </recommendedName>
    <alternativeName>
        <fullName evidence="1">Gamma-glutamyl kinase</fullName>
        <shortName evidence="1">GK</shortName>
    </alternativeName>
</protein>
<accession>B7MQ78</accession>
<feature type="chain" id="PRO_1000193695" description="Glutamate 5-kinase">
    <location>
        <begin position="1"/>
        <end position="367"/>
    </location>
</feature>
<feature type="domain" description="PUA" evidence="1">
    <location>
        <begin position="275"/>
        <end position="353"/>
    </location>
</feature>
<feature type="binding site" evidence="1">
    <location>
        <position position="10"/>
    </location>
    <ligand>
        <name>ATP</name>
        <dbReference type="ChEBI" id="CHEBI:30616"/>
    </ligand>
</feature>
<feature type="binding site" evidence="1">
    <location>
        <position position="50"/>
    </location>
    <ligand>
        <name>substrate</name>
    </ligand>
</feature>
<feature type="binding site" evidence="1">
    <location>
        <position position="137"/>
    </location>
    <ligand>
        <name>substrate</name>
    </ligand>
</feature>
<feature type="binding site" evidence="1">
    <location>
        <position position="149"/>
    </location>
    <ligand>
        <name>substrate</name>
    </ligand>
</feature>
<feature type="binding site" evidence="1">
    <location>
        <begin position="169"/>
        <end position="170"/>
    </location>
    <ligand>
        <name>ATP</name>
        <dbReference type="ChEBI" id="CHEBI:30616"/>
    </ligand>
</feature>
<feature type="binding site" evidence="1">
    <location>
        <begin position="211"/>
        <end position="217"/>
    </location>
    <ligand>
        <name>ATP</name>
        <dbReference type="ChEBI" id="CHEBI:30616"/>
    </ligand>
</feature>
<keyword id="KW-0028">Amino-acid biosynthesis</keyword>
<keyword id="KW-0067">ATP-binding</keyword>
<keyword id="KW-0963">Cytoplasm</keyword>
<keyword id="KW-0418">Kinase</keyword>
<keyword id="KW-0547">Nucleotide-binding</keyword>
<keyword id="KW-0641">Proline biosynthesis</keyword>
<keyword id="KW-0808">Transferase</keyword>
<organism>
    <name type="scientific">Escherichia coli O81 (strain ED1a)</name>
    <dbReference type="NCBI Taxonomy" id="585397"/>
    <lineage>
        <taxon>Bacteria</taxon>
        <taxon>Pseudomonadati</taxon>
        <taxon>Pseudomonadota</taxon>
        <taxon>Gammaproteobacteria</taxon>
        <taxon>Enterobacterales</taxon>
        <taxon>Enterobacteriaceae</taxon>
        <taxon>Escherichia</taxon>
    </lineage>
</organism>
<gene>
    <name evidence="1" type="primary">proB</name>
    <name type="ordered locus">ECED1_0276</name>
</gene>
<proteinExistence type="inferred from homology"/>